<geneLocation type="plasmid">
    <name>large ECE</name>
</geneLocation>
<protein>
    <recommendedName>
        <fullName>Uncharacterized protein MJECL28</fullName>
    </recommendedName>
</protein>
<accession>Q60287</accession>
<keyword id="KW-0614">Plasmid</keyword>
<keyword id="KW-1185">Reference proteome</keyword>
<sequence length="1272" mass="149439">MNNILSNSIKSLRYWDDQTVKAIFDKYQINVSGIYNISDDILESDLKLHIAQLLFLIVKHKEEFSVYLGETHLEKILKKLVKQFKYLEIRFLGKFKGKKQFFIDISDLHVDNILEKTEEIIKLIKKQYEYIKKQKKRRLDGVYVGIAPRKEKRGDAGAATAWSYIAFDFDVEEWKTNKMPTEEEIMEKLIKYLSKFVEKDILPHKVAFTGGGLRFILYPERPILEEELILLRMIAEDLGADIAMYDLARVDRLVGTYNYKEKYGSPRPCVTIAQLTDEEDIEKLLTPIILYEKFGIIENYKEFEVLFNEKREELYNKRGLNNITTTINRLIKKPNLNKTILQDINKRIYKWLYTIQDKLTKKLGKRWIEKLLSYLGIDYKYGKNGTRLDLWSLFFDDGKNPDCSIYINEGYNAVMVDFHDPNMRFIALAGLWMIKEFRDKIIEFLKLHNINPKPSTYRTVREIMNELLDRETIKIEAEGYLPKEAIIKAYQLSIEQGVPVFLKADTGRGKTYTLTRNTREIKEVFKKHAIAVAFPYKIQVLQVGAGLHADGVVVPMYYEDGKKLDKNTIHYLTIGTYDQVENMLNDLCYDTYKGEKIQVANEEDILLAIDEAHDLVIQKEFRKRAITGVKKCIDRAGGCVLLTATPELINLNNYPVIEVEFKDEKKLFERCSIHIAKNIIGEFCEYILLMFRQGWIKNAVVLVDNKKMIENIKYTLELYGFNKPIYVITRETVGIDKASKMIINEEKVPEEGLILATRVISEGVNIKNHVDLVWALYCKSATTIRQFIARCRNGGGELIVTAPFKEREEEPMIIDYNAMIEMFKENYKLLKEYLETDIEVLKELDKNYKKVLISQIQNAIYYDEEKKDWVLDEDEIAHIYNSLLEAHITRDYKLLKEYLEKTTGYEFAIKTIKELKESKLDKFLKYNYLEYLEKVSAKHIIIAFKEYGVNEIKNALEYNNYKKFKDCRDEYTPQLIKKHSKRINRSINVLKDVYNIPEVIEVYNLMLNKGKDDDKKSNLDENTIKKCLEEINEYKKIVKEINENEDRKTKKIYHIDLKLLEEHKDKLSTLARIIEELILKTFLCPPSKWGKIQRIIRAVWNIVVGEDDERLDRRKLGLRSLVAKVLIKVRDFAIERQKFKIRELIEVIKEECGFTLTLDEVRRLIRAIFNCVIRGVKKLGENAVVEIKELNKEFKTLYEIIKQNINSNSVEKCEKVIEKKIEENGGEILEMELYELIVEKLKFVEEVFYKALEKLKKLGVIYEPKPGLLRIT</sequence>
<organism>
    <name type="scientific">Methanocaldococcus jannaschii (strain ATCC 43067 / DSM 2661 / JAL-1 / JCM 10045 / NBRC 100440)</name>
    <name type="common">Methanococcus jannaschii</name>
    <dbReference type="NCBI Taxonomy" id="243232"/>
    <lineage>
        <taxon>Archaea</taxon>
        <taxon>Methanobacteriati</taxon>
        <taxon>Methanobacteriota</taxon>
        <taxon>Methanomada group</taxon>
        <taxon>Methanococci</taxon>
        <taxon>Methanococcales</taxon>
        <taxon>Methanocaldococcaceae</taxon>
        <taxon>Methanocaldococcus</taxon>
    </lineage>
</organism>
<dbReference type="EMBL" id="L77118">
    <property type="protein sequence ID" value="AAC37099.1"/>
    <property type="molecule type" value="Genomic_DNA"/>
</dbReference>
<dbReference type="PIR" id="C64513">
    <property type="entry name" value="C64513"/>
</dbReference>
<dbReference type="RefSeq" id="WP_010890075.1">
    <property type="nucleotide sequence ID" value="NC_001732.1"/>
</dbReference>
<dbReference type="PaxDb" id="243232-MJ_ECL28"/>
<dbReference type="EnsemblBacteria" id="AAC37099">
    <property type="protein sequence ID" value="AAC37099"/>
    <property type="gene ID" value="MJ_ECL28"/>
</dbReference>
<dbReference type="GeneID" id="1450812"/>
<dbReference type="KEGG" id="mja:MJ_ECL28"/>
<dbReference type="eggNOG" id="arCOG07629">
    <property type="taxonomic scope" value="Archaea"/>
</dbReference>
<dbReference type="HOGENOM" id="CLU_271775_0_0_2"/>
<dbReference type="InParanoid" id="Q60287"/>
<dbReference type="OrthoDB" id="64406at2157"/>
<dbReference type="Proteomes" id="UP000000805">
    <property type="component" value="Plasmid pDSM2661_1"/>
</dbReference>
<dbReference type="GO" id="GO:0005524">
    <property type="term" value="F:ATP binding"/>
    <property type="evidence" value="ECO:0007669"/>
    <property type="project" value="InterPro"/>
</dbReference>
<dbReference type="GO" id="GO:0003677">
    <property type="term" value="F:DNA binding"/>
    <property type="evidence" value="ECO:0007669"/>
    <property type="project" value="InterPro"/>
</dbReference>
<dbReference type="GO" id="GO:0016787">
    <property type="term" value="F:hydrolase activity"/>
    <property type="evidence" value="ECO:0007669"/>
    <property type="project" value="InterPro"/>
</dbReference>
<dbReference type="Gene3D" id="3.40.50.300">
    <property type="entry name" value="P-loop containing nucleotide triphosphate hydrolases"/>
    <property type="match status" value="1"/>
</dbReference>
<dbReference type="InterPro" id="IPR006935">
    <property type="entry name" value="Helicase/UvrB_N"/>
</dbReference>
<dbReference type="InterPro" id="IPR027417">
    <property type="entry name" value="P-loop_NTPase"/>
</dbReference>
<dbReference type="Pfam" id="PF04851">
    <property type="entry name" value="ResIII"/>
    <property type="match status" value="1"/>
</dbReference>
<dbReference type="SUPFAM" id="SSF52540">
    <property type="entry name" value="P-loop containing nucleoside triphosphate hydrolases"/>
    <property type="match status" value="1"/>
</dbReference>
<proteinExistence type="predicted"/>
<feature type="chain" id="PRO_0000107514" description="Uncharacterized protein MJECL28">
    <location>
        <begin position="1"/>
        <end position="1272"/>
    </location>
</feature>
<name>Y3528_METJA</name>
<reference key="1">
    <citation type="journal article" date="1996" name="Science">
        <title>Complete genome sequence of the methanogenic archaeon, Methanococcus jannaschii.</title>
        <authorList>
            <person name="Bult C.J."/>
            <person name="White O."/>
            <person name="Olsen G.J."/>
            <person name="Zhou L."/>
            <person name="Fleischmann R.D."/>
            <person name="Sutton G.G."/>
            <person name="Blake J.A."/>
            <person name="FitzGerald L.M."/>
            <person name="Clayton R.A."/>
            <person name="Gocayne J.D."/>
            <person name="Kerlavage A.R."/>
            <person name="Dougherty B.A."/>
            <person name="Tomb J.-F."/>
            <person name="Adams M.D."/>
            <person name="Reich C.I."/>
            <person name="Overbeek R."/>
            <person name="Kirkness E.F."/>
            <person name="Weinstock K.G."/>
            <person name="Merrick J.M."/>
            <person name="Glodek A."/>
            <person name="Scott J.L."/>
            <person name="Geoghagen N.S.M."/>
            <person name="Weidman J.F."/>
            <person name="Fuhrmann J.L."/>
            <person name="Nguyen D."/>
            <person name="Utterback T.R."/>
            <person name="Kelley J.M."/>
            <person name="Peterson J.D."/>
            <person name="Sadow P.W."/>
            <person name="Hanna M.C."/>
            <person name="Cotton M.D."/>
            <person name="Roberts K.M."/>
            <person name="Hurst M.A."/>
            <person name="Kaine B.P."/>
            <person name="Borodovsky M."/>
            <person name="Klenk H.-P."/>
            <person name="Fraser C.M."/>
            <person name="Smith H.O."/>
            <person name="Woese C.R."/>
            <person name="Venter J.C."/>
        </authorList>
    </citation>
    <scope>NUCLEOTIDE SEQUENCE [LARGE SCALE GENOMIC DNA]</scope>
    <source>
        <strain>ATCC 43067 / DSM 2661 / JAL-1 / JCM 10045 / NBRC 100440</strain>
    </source>
</reference>
<gene>
    <name type="ordered locus">MJECL28</name>
</gene>